<organism>
    <name type="scientific">Agrobacterium fabrum (strain C58 / ATCC 33970)</name>
    <name type="common">Agrobacterium tumefaciens (strain C58)</name>
    <dbReference type="NCBI Taxonomy" id="176299"/>
    <lineage>
        <taxon>Bacteria</taxon>
        <taxon>Pseudomonadati</taxon>
        <taxon>Pseudomonadota</taxon>
        <taxon>Alphaproteobacteria</taxon>
        <taxon>Hyphomicrobiales</taxon>
        <taxon>Rhizobiaceae</taxon>
        <taxon>Rhizobium/Agrobacterium group</taxon>
        <taxon>Agrobacterium</taxon>
        <taxon>Agrobacterium tumefaciens complex</taxon>
    </lineage>
</organism>
<feature type="chain" id="PRO_0000140705" description="3-dehydroquinate synthase">
    <location>
        <begin position="1"/>
        <end position="377"/>
    </location>
</feature>
<feature type="binding site" evidence="1">
    <location>
        <begin position="115"/>
        <end position="119"/>
    </location>
    <ligand>
        <name>NAD(+)</name>
        <dbReference type="ChEBI" id="CHEBI:57540"/>
    </ligand>
</feature>
<feature type="binding site" evidence="1">
    <location>
        <begin position="139"/>
        <end position="140"/>
    </location>
    <ligand>
        <name>NAD(+)</name>
        <dbReference type="ChEBI" id="CHEBI:57540"/>
    </ligand>
</feature>
<feature type="binding site" evidence="1">
    <location>
        <position position="152"/>
    </location>
    <ligand>
        <name>NAD(+)</name>
        <dbReference type="ChEBI" id="CHEBI:57540"/>
    </ligand>
</feature>
<feature type="binding site" evidence="1">
    <location>
        <position position="161"/>
    </location>
    <ligand>
        <name>NAD(+)</name>
        <dbReference type="ChEBI" id="CHEBI:57540"/>
    </ligand>
</feature>
<feature type="binding site" evidence="1">
    <location>
        <position position="194"/>
    </location>
    <ligand>
        <name>Zn(2+)</name>
        <dbReference type="ChEBI" id="CHEBI:29105"/>
    </ligand>
</feature>
<feature type="binding site" evidence="1">
    <location>
        <position position="256"/>
    </location>
    <ligand>
        <name>Zn(2+)</name>
        <dbReference type="ChEBI" id="CHEBI:29105"/>
    </ligand>
</feature>
<feature type="binding site" evidence="1">
    <location>
        <position position="275"/>
    </location>
    <ligand>
        <name>Zn(2+)</name>
        <dbReference type="ChEBI" id="CHEBI:29105"/>
    </ligand>
</feature>
<protein>
    <recommendedName>
        <fullName evidence="1">3-dehydroquinate synthase</fullName>
        <shortName evidence="1">DHQS</shortName>
        <ecNumber evidence="1">4.2.3.4</ecNumber>
    </recommendedName>
</protein>
<name>AROB_AGRFC</name>
<proteinExistence type="inferred from homology"/>
<accession>Q8U9V0</accession>
<gene>
    <name evidence="1" type="primary">aroB</name>
    <name type="ordered locus">Atu3625</name>
    <name type="ORF">AGR_L_2401</name>
</gene>
<keyword id="KW-0028">Amino-acid biosynthesis</keyword>
<keyword id="KW-0057">Aromatic amino acid biosynthesis</keyword>
<keyword id="KW-0170">Cobalt</keyword>
<keyword id="KW-0963">Cytoplasm</keyword>
<keyword id="KW-0456">Lyase</keyword>
<keyword id="KW-0479">Metal-binding</keyword>
<keyword id="KW-0520">NAD</keyword>
<keyword id="KW-0547">Nucleotide-binding</keyword>
<keyword id="KW-1185">Reference proteome</keyword>
<keyword id="KW-0862">Zinc</keyword>
<sequence length="377" mass="40050">MTPSEIHADERLVHVPLGERAYDILIGPGLIGRAGGEISARLKGRRAAIITDEHVAPLYLEGLMDGLQTDGIEAVSLTLPAGEKTKSFEHLVTVCDAVLSARVERNDAVIALGGGVIGDLAGFAAGIVRRGVRFVQIPTSLLSQVDSSVGGKTGINTRHGKNLVGVFHQPDLVLADTAVLDTLSPREFRAGYAEVVKYGLIDKPDFFFWLEKNWDDIRTGGPARIEAIATSCQAKADVVVADEKENGVRALLNLGHTFGHALEAATNYDSKRLVHGEGVAIGMVLAHQFSARLNLASPDDAARVEAHLKAVGLPTTMKDIPGELPPVETLMAAIAQDKKVKGGKLTFILTHGIGQSFVADDVASSEVQSFLSEKHPG</sequence>
<dbReference type="EC" id="4.2.3.4" evidence="1"/>
<dbReference type="EMBL" id="AE007870">
    <property type="protein sequence ID" value="AAK89771.1"/>
    <property type="molecule type" value="Genomic_DNA"/>
</dbReference>
<dbReference type="PIR" id="A99281">
    <property type="entry name" value="A99281"/>
</dbReference>
<dbReference type="PIR" id="AG3002">
    <property type="entry name" value="AG3002"/>
</dbReference>
<dbReference type="RefSeq" id="NP_356986.1">
    <property type="nucleotide sequence ID" value="NC_003063.2"/>
</dbReference>
<dbReference type="RefSeq" id="WP_010973197.1">
    <property type="nucleotide sequence ID" value="NC_003063.2"/>
</dbReference>
<dbReference type="SMR" id="Q8U9V0"/>
<dbReference type="STRING" id="176299.Atu3625"/>
<dbReference type="EnsemblBacteria" id="AAK89771">
    <property type="protein sequence ID" value="AAK89771"/>
    <property type="gene ID" value="Atu3625"/>
</dbReference>
<dbReference type="GeneID" id="1135499"/>
<dbReference type="KEGG" id="atu:Atu3625"/>
<dbReference type="PATRIC" id="fig|176299.10.peg.3472"/>
<dbReference type="eggNOG" id="COG0337">
    <property type="taxonomic scope" value="Bacteria"/>
</dbReference>
<dbReference type="HOGENOM" id="CLU_001201_0_2_5"/>
<dbReference type="OrthoDB" id="9806583at2"/>
<dbReference type="PhylomeDB" id="Q8U9V0"/>
<dbReference type="UniPathway" id="UPA00053">
    <property type="reaction ID" value="UER00085"/>
</dbReference>
<dbReference type="Proteomes" id="UP000000813">
    <property type="component" value="Chromosome linear"/>
</dbReference>
<dbReference type="GO" id="GO:0005737">
    <property type="term" value="C:cytoplasm"/>
    <property type="evidence" value="ECO:0007669"/>
    <property type="project" value="UniProtKB-SubCell"/>
</dbReference>
<dbReference type="GO" id="GO:0003856">
    <property type="term" value="F:3-dehydroquinate synthase activity"/>
    <property type="evidence" value="ECO:0007669"/>
    <property type="project" value="UniProtKB-UniRule"/>
</dbReference>
<dbReference type="GO" id="GO:0046872">
    <property type="term" value="F:metal ion binding"/>
    <property type="evidence" value="ECO:0007669"/>
    <property type="project" value="UniProtKB-KW"/>
</dbReference>
<dbReference type="GO" id="GO:0000166">
    <property type="term" value="F:nucleotide binding"/>
    <property type="evidence" value="ECO:0007669"/>
    <property type="project" value="UniProtKB-KW"/>
</dbReference>
<dbReference type="GO" id="GO:0008652">
    <property type="term" value="P:amino acid biosynthetic process"/>
    <property type="evidence" value="ECO:0007669"/>
    <property type="project" value="UniProtKB-KW"/>
</dbReference>
<dbReference type="GO" id="GO:0009073">
    <property type="term" value="P:aromatic amino acid family biosynthetic process"/>
    <property type="evidence" value="ECO:0007669"/>
    <property type="project" value="UniProtKB-KW"/>
</dbReference>
<dbReference type="GO" id="GO:0009423">
    <property type="term" value="P:chorismate biosynthetic process"/>
    <property type="evidence" value="ECO:0007669"/>
    <property type="project" value="UniProtKB-UniRule"/>
</dbReference>
<dbReference type="CDD" id="cd08195">
    <property type="entry name" value="DHQS"/>
    <property type="match status" value="1"/>
</dbReference>
<dbReference type="FunFam" id="3.40.50.1970:FF:000001">
    <property type="entry name" value="3-dehydroquinate synthase"/>
    <property type="match status" value="1"/>
</dbReference>
<dbReference type="Gene3D" id="3.40.50.1970">
    <property type="match status" value="1"/>
</dbReference>
<dbReference type="Gene3D" id="1.20.1090.10">
    <property type="entry name" value="Dehydroquinate synthase-like - alpha domain"/>
    <property type="match status" value="1"/>
</dbReference>
<dbReference type="HAMAP" id="MF_00110">
    <property type="entry name" value="DHQ_synthase"/>
    <property type="match status" value="1"/>
</dbReference>
<dbReference type="InterPro" id="IPR050071">
    <property type="entry name" value="Dehydroquinate_synthase"/>
</dbReference>
<dbReference type="InterPro" id="IPR016037">
    <property type="entry name" value="DHQ_synth_AroB"/>
</dbReference>
<dbReference type="InterPro" id="IPR030963">
    <property type="entry name" value="DHQ_synth_fam"/>
</dbReference>
<dbReference type="InterPro" id="IPR030960">
    <property type="entry name" value="DHQS/DOIS_N"/>
</dbReference>
<dbReference type="InterPro" id="IPR056179">
    <property type="entry name" value="DHQS_C"/>
</dbReference>
<dbReference type="NCBIfam" id="TIGR01357">
    <property type="entry name" value="aroB"/>
    <property type="match status" value="1"/>
</dbReference>
<dbReference type="PANTHER" id="PTHR43622">
    <property type="entry name" value="3-DEHYDROQUINATE SYNTHASE"/>
    <property type="match status" value="1"/>
</dbReference>
<dbReference type="PANTHER" id="PTHR43622:SF7">
    <property type="entry name" value="3-DEHYDROQUINATE SYNTHASE, CHLOROPLASTIC"/>
    <property type="match status" value="1"/>
</dbReference>
<dbReference type="Pfam" id="PF01761">
    <property type="entry name" value="DHQ_synthase"/>
    <property type="match status" value="1"/>
</dbReference>
<dbReference type="Pfam" id="PF24621">
    <property type="entry name" value="DHQS_C"/>
    <property type="match status" value="1"/>
</dbReference>
<dbReference type="PIRSF" id="PIRSF001455">
    <property type="entry name" value="DHQ_synth"/>
    <property type="match status" value="1"/>
</dbReference>
<dbReference type="SUPFAM" id="SSF56796">
    <property type="entry name" value="Dehydroquinate synthase-like"/>
    <property type="match status" value="1"/>
</dbReference>
<reference key="1">
    <citation type="journal article" date="2001" name="Science">
        <title>The genome of the natural genetic engineer Agrobacterium tumefaciens C58.</title>
        <authorList>
            <person name="Wood D.W."/>
            <person name="Setubal J.C."/>
            <person name="Kaul R."/>
            <person name="Monks D.E."/>
            <person name="Kitajima J.P."/>
            <person name="Okura V.K."/>
            <person name="Zhou Y."/>
            <person name="Chen L."/>
            <person name="Wood G.E."/>
            <person name="Almeida N.F. Jr."/>
            <person name="Woo L."/>
            <person name="Chen Y."/>
            <person name="Paulsen I.T."/>
            <person name="Eisen J.A."/>
            <person name="Karp P.D."/>
            <person name="Bovee D. Sr."/>
            <person name="Chapman P."/>
            <person name="Clendenning J."/>
            <person name="Deatherage G."/>
            <person name="Gillet W."/>
            <person name="Grant C."/>
            <person name="Kutyavin T."/>
            <person name="Levy R."/>
            <person name="Li M.-J."/>
            <person name="McClelland E."/>
            <person name="Palmieri A."/>
            <person name="Raymond C."/>
            <person name="Rouse G."/>
            <person name="Saenphimmachak C."/>
            <person name="Wu Z."/>
            <person name="Romero P."/>
            <person name="Gordon D."/>
            <person name="Zhang S."/>
            <person name="Yoo H."/>
            <person name="Tao Y."/>
            <person name="Biddle P."/>
            <person name="Jung M."/>
            <person name="Krespan W."/>
            <person name="Perry M."/>
            <person name="Gordon-Kamm B."/>
            <person name="Liao L."/>
            <person name="Kim S."/>
            <person name="Hendrick C."/>
            <person name="Zhao Z.-Y."/>
            <person name="Dolan M."/>
            <person name="Chumley F."/>
            <person name="Tingey S.V."/>
            <person name="Tomb J.-F."/>
            <person name="Gordon M.P."/>
            <person name="Olson M.V."/>
            <person name="Nester E.W."/>
        </authorList>
    </citation>
    <scope>NUCLEOTIDE SEQUENCE [LARGE SCALE GENOMIC DNA]</scope>
    <source>
        <strain>C58 / ATCC 33970</strain>
    </source>
</reference>
<reference key="2">
    <citation type="journal article" date="2001" name="Science">
        <title>Genome sequence of the plant pathogen and biotechnology agent Agrobacterium tumefaciens C58.</title>
        <authorList>
            <person name="Goodner B."/>
            <person name="Hinkle G."/>
            <person name="Gattung S."/>
            <person name="Miller N."/>
            <person name="Blanchard M."/>
            <person name="Qurollo B."/>
            <person name="Goldman B.S."/>
            <person name="Cao Y."/>
            <person name="Askenazi M."/>
            <person name="Halling C."/>
            <person name="Mullin L."/>
            <person name="Houmiel K."/>
            <person name="Gordon J."/>
            <person name="Vaudin M."/>
            <person name="Iartchouk O."/>
            <person name="Epp A."/>
            <person name="Liu F."/>
            <person name="Wollam C."/>
            <person name="Allinger M."/>
            <person name="Doughty D."/>
            <person name="Scott C."/>
            <person name="Lappas C."/>
            <person name="Markelz B."/>
            <person name="Flanagan C."/>
            <person name="Crowell C."/>
            <person name="Gurson J."/>
            <person name="Lomo C."/>
            <person name="Sear C."/>
            <person name="Strub G."/>
            <person name="Cielo C."/>
            <person name="Slater S."/>
        </authorList>
    </citation>
    <scope>NUCLEOTIDE SEQUENCE [LARGE SCALE GENOMIC DNA]</scope>
    <source>
        <strain>C58 / ATCC 33970</strain>
    </source>
</reference>
<evidence type="ECO:0000255" key="1">
    <source>
        <dbReference type="HAMAP-Rule" id="MF_00110"/>
    </source>
</evidence>
<comment type="function">
    <text evidence="1">Catalyzes the conversion of 3-deoxy-D-arabino-heptulosonate 7-phosphate (DAHP) to dehydroquinate (DHQ).</text>
</comment>
<comment type="catalytic activity">
    <reaction evidence="1">
        <text>7-phospho-2-dehydro-3-deoxy-D-arabino-heptonate = 3-dehydroquinate + phosphate</text>
        <dbReference type="Rhea" id="RHEA:21968"/>
        <dbReference type="ChEBI" id="CHEBI:32364"/>
        <dbReference type="ChEBI" id="CHEBI:43474"/>
        <dbReference type="ChEBI" id="CHEBI:58394"/>
        <dbReference type="EC" id="4.2.3.4"/>
    </reaction>
</comment>
<comment type="cofactor">
    <cofactor evidence="1">
        <name>NAD(+)</name>
        <dbReference type="ChEBI" id="CHEBI:57540"/>
    </cofactor>
</comment>
<comment type="cofactor">
    <cofactor evidence="1">
        <name>Co(2+)</name>
        <dbReference type="ChEBI" id="CHEBI:48828"/>
    </cofactor>
    <cofactor evidence="1">
        <name>Zn(2+)</name>
        <dbReference type="ChEBI" id="CHEBI:29105"/>
    </cofactor>
    <text evidence="1">Binds 1 divalent metal cation per subunit. Can use either Co(2+) or Zn(2+).</text>
</comment>
<comment type="pathway">
    <text evidence="1">Metabolic intermediate biosynthesis; chorismate biosynthesis; chorismate from D-erythrose 4-phosphate and phosphoenolpyruvate: step 2/7.</text>
</comment>
<comment type="subcellular location">
    <subcellularLocation>
        <location evidence="1">Cytoplasm</location>
    </subcellularLocation>
</comment>
<comment type="similarity">
    <text evidence="1">Belongs to the sugar phosphate cyclases superfamily. Dehydroquinate synthase family.</text>
</comment>